<protein>
    <recommendedName>
        <fullName evidence="1">Secretion monitor</fullName>
    </recommendedName>
</protein>
<accession>A1A7E2</accession>
<reference key="1">
    <citation type="journal article" date="2007" name="J. Bacteriol.">
        <title>The genome sequence of avian pathogenic Escherichia coli strain O1:K1:H7 shares strong similarities with human extraintestinal pathogenic E. coli genomes.</title>
        <authorList>
            <person name="Johnson T.J."/>
            <person name="Kariyawasam S."/>
            <person name="Wannemuehler Y."/>
            <person name="Mangiamele P."/>
            <person name="Johnson S.J."/>
            <person name="Doetkott C."/>
            <person name="Skyberg J.A."/>
            <person name="Lynne A.M."/>
            <person name="Johnson J.R."/>
            <person name="Nolan L.K."/>
        </authorList>
    </citation>
    <scope>NUCLEOTIDE SEQUENCE [LARGE SCALE GENOMIC DNA]</scope>
</reference>
<organism>
    <name type="scientific">Escherichia coli O1:K1 / APEC</name>
    <dbReference type="NCBI Taxonomy" id="405955"/>
    <lineage>
        <taxon>Bacteria</taxon>
        <taxon>Pseudomonadati</taxon>
        <taxon>Pseudomonadota</taxon>
        <taxon>Gammaproteobacteria</taxon>
        <taxon>Enterobacterales</taxon>
        <taxon>Enterobacteriaceae</taxon>
        <taxon>Escherichia</taxon>
    </lineage>
</organism>
<evidence type="ECO:0000255" key="1">
    <source>
        <dbReference type="HAMAP-Rule" id="MF_01332"/>
    </source>
</evidence>
<evidence type="ECO:0000305" key="2"/>
<keyword id="KW-0963">Cytoplasm</keyword>
<keyword id="KW-0574">Periplasm</keyword>
<keyword id="KW-1185">Reference proteome</keyword>
<keyword id="KW-0732">Signal</keyword>
<name>SECM_ECOK1</name>
<feature type="signal peptide" evidence="1">
    <location>
        <begin position="1"/>
        <end position="37"/>
    </location>
</feature>
<feature type="chain" id="PRO_0000314445" description="Secretion monitor">
    <location>
        <begin position="38"/>
        <end position="170"/>
    </location>
</feature>
<gene>
    <name evidence="1" type="primary">secM</name>
    <name type="ordered locus">Ecok1_00880</name>
    <name type="ORF">APECO1_1889</name>
</gene>
<dbReference type="EMBL" id="CP000468">
    <property type="protein sequence ID" value="ABI99581.1"/>
    <property type="status" value="ALT_INIT"/>
    <property type="molecule type" value="Genomic_DNA"/>
</dbReference>
<dbReference type="RefSeq" id="WP_000014320.1">
    <property type="nucleotide sequence ID" value="NZ_CADILS010000048.1"/>
</dbReference>
<dbReference type="SMR" id="A1A7E2"/>
<dbReference type="GeneID" id="75169997"/>
<dbReference type="KEGG" id="ecv:APECO1_1889"/>
<dbReference type="HOGENOM" id="CLU_108853_0_0_6"/>
<dbReference type="Proteomes" id="UP000008216">
    <property type="component" value="Chromosome"/>
</dbReference>
<dbReference type="GO" id="GO:0005829">
    <property type="term" value="C:cytosol"/>
    <property type="evidence" value="ECO:0007669"/>
    <property type="project" value="UniProtKB-SubCell"/>
</dbReference>
<dbReference type="GO" id="GO:0042597">
    <property type="term" value="C:periplasmic space"/>
    <property type="evidence" value="ECO:0007669"/>
    <property type="project" value="UniProtKB-SubCell"/>
</dbReference>
<dbReference type="GO" id="GO:0045182">
    <property type="term" value="F:translation regulator activity"/>
    <property type="evidence" value="ECO:0007669"/>
    <property type="project" value="InterPro"/>
</dbReference>
<dbReference type="HAMAP" id="MF_01332">
    <property type="entry name" value="SecM"/>
    <property type="match status" value="1"/>
</dbReference>
<dbReference type="InterPro" id="IPR009502">
    <property type="entry name" value="SecM"/>
</dbReference>
<dbReference type="NCBIfam" id="NF002799">
    <property type="entry name" value="PRK02943.1-1"/>
    <property type="match status" value="1"/>
</dbReference>
<dbReference type="Pfam" id="PF06558">
    <property type="entry name" value="SecM"/>
    <property type="match status" value="1"/>
</dbReference>
<dbReference type="PIRSF" id="PIRSF004572">
    <property type="entry name" value="SecM"/>
    <property type="match status" value="1"/>
</dbReference>
<proteinExistence type="inferred from homology"/>
<sequence length="170" mass="18866">MSGILTRWRQFGKRYFWPHLLLGMVAASLGLPALSNAAEPNAPAKATTRNHEPSAKVNFGQLALLEANTRRPNSNYSVDYWHQHAIRTVIRHLSFAMAPQTLPVAEESLPLQAQHLALLDTLSALLTQEGTPSEKGYRIDYAHFTPQAKFSTPVWISQAQGIRAGPQRLS</sequence>
<comment type="function">
    <text evidence="1">Regulates secA expression by translational coupling of the secM secA operon. Translational pausing at a specific Pro residue 5 residues before the end of the protein may allow disruption of a mRNA repressor helix that normally suppresses secA translation initiation.</text>
</comment>
<comment type="subcellular location">
    <subcellularLocation>
        <location evidence="1">Cytoplasm</location>
        <location evidence="1">Cytosol</location>
    </subcellularLocation>
    <subcellularLocation>
        <location evidence="1">Periplasm</location>
    </subcellularLocation>
    <text evidence="1">The active form is cytosolic, while the periplasmic form is rapidly degraded, mainly by the tail-specific protease.</text>
</comment>
<comment type="similarity">
    <text evidence="1">Belongs to the SecM family.</text>
</comment>
<comment type="sequence caution" evidence="2">
    <conflict type="erroneous initiation">
        <sequence resource="EMBL-CDS" id="ABI99581"/>
    </conflict>
</comment>